<protein>
    <recommendedName>
        <fullName>Probable DNA replication complex GINS protein PSF2</fullName>
    </recommendedName>
    <alternativeName>
        <fullName>GINS complex subunit 2</fullName>
    </alternativeName>
</protein>
<gene>
    <name type="primary">psf-2</name>
    <name type="ORF">F31C3.5</name>
</gene>
<evidence type="ECO:0000250" key="1"/>
<evidence type="ECO:0000250" key="2">
    <source>
        <dbReference type="UniProtKB" id="Q9Y248"/>
    </source>
</evidence>
<evidence type="ECO:0000305" key="3"/>
<reference key="1">
    <citation type="journal article" date="1998" name="Science">
        <title>Genome sequence of the nematode C. elegans: a platform for investigating biology.</title>
        <authorList>
            <consortium name="The C. elegans sequencing consortium"/>
        </authorList>
    </citation>
    <scope>NUCLEOTIDE SEQUENCE [LARGE SCALE GENOMIC DNA]</scope>
    <source>
        <strain>Bristol N2</strain>
    </source>
</reference>
<accession>O62193</accession>
<sequence>MNAERCEFIAGNSLIEVIPSISDDRPIHLISGDIGPFEAGVPCRIPVWTAILMKRKHNCKVVAPQWMDVDELKKILTSETESQGLAKLPDHFFEISHMLVRDAREDIFEVEAVKSLVQDIYDRRDAKLRSSAIEFLRQNQTCHAQLDNVQLIEASSARATLEACRQMGAVVRNKHESTPL</sequence>
<dbReference type="EMBL" id="Z92784">
    <property type="protein sequence ID" value="CAB07195.1"/>
    <property type="molecule type" value="Genomic_DNA"/>
</dbReference>
<dbReference type="PIR" id="T21590">
    <property type="entry name" value="T21590"/>
</dbReference>
<dbReference type="RefSeq" id="NP_493627.1">
    <property type="nucleotide sequence ID" value="NM_061226.3"/>
</dbReference>
<dbReference type="PDB" id="8OUW">
    <property type="method" value="EM"/>
    <property type="resolution" value="3.75 A"/>
    <property type="chains" value="B=1-180"/>
</dbReference>
<dbReference type="PDBsum" id="8OUW"/>
<dbReference type="EMDB" id="EMD-17204"/>
<dbReference type="SMR" id="O62193"/>
<dbReference type="BioGRID" id="49923">
    <property type="interactions" value="4"/>
</dbReference>
<dbReference type="FunCoup" id="O62193">
    <property type="interactions" value="1751"/>
</dbReference>
<dbReference type="IntAct" id="O62193">
    <property type="interactions" value="1"/>
</dbReference>
<dbReference type="STRING" id="6239.F31C3.5.1"/>
<dbReference type="PaxDb" id="6239-F31C3.5"/>
<dbReference type="PeptideAtlas" id="O62193"/>
<dbReference type="EnsemblMetazoa" id="F31C3.5.1">
    <property type="protein sequence ID" value="F31C3.5.1"/>
    <property type="gene ID" value="WBGene00009287"/>
</dbReference>
<dbReference type="GeneID" id="185146"/>
<dbReference type="KEGG" id="cel:CELE_F31C3.5"/>
<dbReference type="UCSC" id="F31C3.5">
    <property type="organism name" value="c. elegans"/>
</dbReference>
<dbReference type="AGR" id="WB:WBGene00009287"/>
<dbReference type="CTD" id="185146"/>
<dbReference type="WormBase" id="F31C3.5">
    <property type="protein sequence ID" value="CE17734"/>
    <property type="gene ID" value="WBGene00009287"/>
    <property type="gene designation" value="psf-2"/>
</dbReference>
<dbReference type="eggNOG" id="KOG4071">
    <property type="taxonomic scope" value="Eukaryota"/>
</dbReference>
<dbReference type="GeneTree" id="ENSGT00390000007838"/>
<dbReference type="HOGENOM" id="CLU_078274_2_0_1"/>
<dbReference type="InParanoid" id="O62193"/>
<dbReference type="OMA" id="DSLNCMY"/>
<dbReference type="OrthoDB" id="1938138at2759"/>
<dbReference type="PhylomeDB" id="O62193"/>
<dbReference type="Reactome" id="R-CEL-176974">
    <property type="pathway name" value="Unwinding of DNA"/>
</dbReference>
<dbReference type="PRO" id="PR:O62193"/>
<dbReference type="Proteomes" id="UP000001940">
    <property type="component" value="Chromosome I"/>
</dbReference>
<dbReference type="Bgee" id="WBGene00009287">
    <property type="expression patterns" value="Expressed in germ line (C elegans) and 4 other cell types or tissues"/>
</dbReference>
<dbReference type="GO" id="GO:0000811">
    <property type="term" value="C:GINS complex"/>
    <property type="evidence" value="ECO:0000318"/>
    <property type="project" value="GO_Central"/>
</dbReference>
<dbReference type="GO" id="GO:0006260">
    <property type="term" value="P:DNA replication"/>
    <property type="evidence" value="ECO:0007669"/>
    <property type="project" value="UniProtKB-KW"/>
</dbReference>
<dbReference type="GO" id="GO:0000727">
    <property type="term" value="P:double-strand break repair via break-induced replication"/>
    <property type="evidence" value="ECO:0000318"/>
    <property type="project" value="GO_Central"/>
</dbReference>
<dbReference type="CDD" id="cd11712">
    <property type="entry name" value="GINS_A_psf2"/>
    <property type="match status" value="1"/>
</dbReference>
<dbReference type="CDD" id="cd21694">
    <property type="entry name" value="GINS_B_Psf2"/>
    <property type="match status" value="1"/>
</dbReference>
<dbReference type="FunFam" id="1.20.58.1020:FF:000001">
    <property type="entry name" value="DNA replication complex GINS protein PSF2"/>
    <property type="match status" value="1"/>
</dbReference>
<dbReference type="FunFam" id="3.40.5.50:FF:000001">
    <property type="entry name" value="DNA replication complex GINS protein PSF2"/>
    <property type="match status" value="1"/>
</dbReference>
<dbReference type="Gene3D" id="1.20.58.1020">
    <property type="match status" value="1"/>
</dbReference>
<dbReference type="Gene3D" id="3.40.5.50">
    <property type="match status" value="1"/>
</dbReference>
<dbReference type="InterPro" id="IPR021151">
    <property type="entry name" value="GINS_A"/>
</dbReference>
<dbReference type="InterPro" id="IPR036224">
    <property type="entry name" value="GINS_bundle-like_dom_sf"/>
</dbReference>
<dbReference type="InterPro" id="IPR007257">
    <property type="entry name" value="GINS_Psf2"/>
</dbReference>
<dbReference type="InterPro" id="IPR056784">
    <property type="entry name" value="PSF2_N"/>
</dbReference>
<dbReference type="PANTHER" id="PTHR12772">
    <property type="entry name" value="DNA REPLICATION COMPLEX GINS PROTEIN PSF2"/>
    <property type="match status" value="1"/>
</dbReference>
<dbReference type="PANTHER" id="PTHR12772:SF0">
    <property type="entry name" value="DNA REPLICATION COMPLEX GINS PROTEIN PSF2"/>
    <property type="match status" value="1"/>
</dbReference>
<dbReference type="Pfam" id="PF25005">
    <property type="entry name" value="PSF2_N"/>
    <property type="match status" value="1"/>
</dbReference>
<dbReference type="Pfam" id="PF05916">
    <property type="entry name" value="Sld5"/>
    <property type="match status" value="1"/>
</dbReference>
<dbReference type="PIRSF" id="PIRSF028998">
    <property type="entry name" value="GINS_Psf2_subgr"/>
    <property type="match status" value="1"/>
</dbReference>
<dbReference type="SUPFAM" id="SSF158573">
    <property type="entry name" value="GINS helical bundle-like"/>
    <property type="match status" value="1"/>
</dbReference>
<dbReference type="SUPFAM" id="SSF160059">
    <property type="entry name" value="PriA/YqbF domain"/>
    <property type="match status" value="1"/>
</dbReference>
<comment type="function">
    <text evidence="2">Required for correct functioning of the GINS complex, a complex that plays an essential role in the initiation of DNA replication, and progression of DNA replication forks. GINS complex is a core component of CDC45-MCM-GINS (CMG) helicase, the molecular machine that unwinds template DNA during replication, and around which the replisome is built.</text>
</comment>
<comment type="subunit">
    <text evidence="1">Component of the GINS complex which is a heterotetramer of gins1, gins2, gins3 and gins4.</text>
</comment>
<comment type="subcellular location">
    <subcellularLocation>
        <location evidence="1">Nucleus</location>
    </subcellularLocation>
</comment>
<comment type="similarity">
    <text evidence="3">Belongs to the GINS2/PSF2 family.</text>
</comment>
<keyword id="KW-0002">3D-structure</keyword>
<keyword id="KW-0235">DNA replication</keyword>
<keyword id="KW-0539">Nucleus</keyword>
<keyword id="KW-1185">Reference proteome</keyword>
<organism>
    <name type="scientific">Caenorhabditis elegans</name>
    <dbReference type="NCBI Taxonomy" id="6239"/>
    <lineage>
        <taxon>Eukaryota</taxon>
        <taxon>Metazoa</taxon>
        <taxon>Ecdysozoa</taxon>
        <taxon>Nematoda</taxon>
        <taxon>Chromadorea</taxon>
        <taxon>Rhabditida</taxon>
        <taxon>Rhabditina</taxon>
        <taxon>Rhabditomorpha</taxon>
        <taxon>Rhabditoidea</taxon>
        <taxon>Rhabditidae</taxon>
        <taxon>Peloderinae</taxon>
        <taxon>Caenorhabditis</taxon>
    </lineage>
</organism>
<proteinExistence type="evidence at protein level"/>
<feature type="chain" id="PRO_0000194818" description="Probable DNA replication complex GINS protein PSF2">
    <location>
        <begin position="1"/>
        <end position="180"/>
    </location>
</feature>
<name>PSF2_CAEEL</name>